<organism>
    <name type="scientific">Danio rerio</name>
    <name type="common">Zebrafish</name>
    <name type="synonym">Brachydanio rerio</name>
    <dbReference type="NCBI Taxonomy" id="7955"/>
    <lineage>
        <taxon>Eukaryota</taxon>
        <taxon>Metazoa</taxon>
        <taxon>Chordata</taxon>
        <taxon>Craniata</taxon>
        <taxon>Vertebrata</taxon>
        <taxon>Euteleostomi</taxon>
        <taxon>Actinopterygii</taxon>
        <taxon>Neopterygii</taxon>
        <taxon>Teleostei</taxon>
        <taxon>Ostariophysi</taxon>
        <taxon>Cypriniformes</taxon>
        <taxon>Danionidae</taxon>
        <taxon>Danioninae</taxon>
        <taxon>Danio</taxon>
    </lineage>
</organism>
<reference key="1">
    <citation type="journal article" date="2013" name="Nature">
        <title>The zebrafish reference genome sequence and its relationship to the human genome.</title>
        <authorList>
            <person name="Howe K."/>
            <person name="Clark M.D."/>
            <person name="Torroja C.F."/>
            <person name="Torrance J."/>
            <person name="Berthelot C."/>
            <person name="Muffato M."/>
            <person name="Collins J.E."/>
            <person name="Humphray S."/>
            <person name="McLaren K."/>
            <person name="Matthews L."/>
            <person name="McLaren S."/>
            <person name="Sealy I."/>
            <person name="Caccamo M."/>
            <person name="Churcher C."/>
            <person name="Scott C."/>
            <person name="Barrett J.C."/>
            <person name="Koch R."/>
            <person name="Rauch G.J."/>
            <person name="White S."/>
            <person name="Chow W."/>
            <person name="Kilian B."/>
            <person name="Quintais L.T."/>
            <person name="Guerra-Assuncao J.A."/>
            <person name="Zhou Y."/>
            <person name="Gu Y."/>
            <person name="Yen J."/>
            <person name="Vogel J.H."/>
            <person name="Eyre T."/>
            <person name="Redmond S."/>
            <person name="Banerjee R."/>
            <person name="Chi J."/>
            <person name="Fu B."/>
            <person name="Langley E."/>
            <person name="Maguire S.F."/>
            <person name="Laird G.K."/>
            <person name="Lloyd D."/>
            <person name="Kenyon E."/>
            <person name="Donaldson S."/>
            <person name="Sehra H."/>
            <person name="Almeida-King J."/>
            <person name="Loveland J."/>
            <person name="Trevanion S."/>
            <person name="Jones M."/>
            <person name="Quail M."/>
            <person name="Willey D."/>
            <person name="Hunt A."/>
            <person name="Burton J."/>
            <person name="Sims S."/>
            <person name="McLay K."/>
            <person name="Plumb B."/>
            <person name="Davis J."/>
            <person name="Clee C."/>
            <person name="Oliver K."/>
            <person name="Clark R."/>
            <person name="Riddle C."/>
            <person name="Elliot D."/>
            <person name="Threadgold G."/>
            <person name="Harden G."/>
            <person name="Ware D."/>
            <person name="Begum S."/>
            <person name="Mortimore B."/>
            <person name="Kerry G."/>
            <person name="Heath P."/>
            <person name="Phillimore B."/>
            <person name="Tracey A."/>
            <person name="Corby N."/>
            <person name="Dunn M."/>
            <person name="Johnson C."/>
            <person name="Wood J."/>
            <person name="Clark S."/>
            <person name="Pelan S."/>
            <person name="Griffiths G."/>
            <person name="Smith M."/>
            <person name="Glithero R."/>
            <person name="Howden P."/>
            <person name="Barker N."/>
            <person name="Lloyd C."/>
            <person name="Stevens C."/>
            <person name="Harley J."/>
            <person name="Holt K."/>
            <person name="Panagiotidis G."/>
            <person name="Lovell J."/>
            <person name="Beasley H."/>
            <person name="Henderson C."/>
            <person name="Gordon D."/>
            <person name="Auger K."/>
            <person name="Wright D."/>
            <person name="Collins J."/>
            <person name="Raisen C."/>
            <person name="Dyer L."/>
            <person name="Leung K."/>
            <person name="Robertson L."/>
            <person name="Ambridge K."/>
            <person name="Leongamornlert D."/>
            <person name="McGuire S."/>
            <person name="Gilderthorp R."/>
            <person name="Griffiths C."/>
            <person name="Manthravadi D."/>
            <person name="Nichol S."/>
            <person name="Barker G."/>
            <person name="Whitehead S."/>
            <person name="Kay M."/>
            <person name="Brown J."/>
            <person name="Murnane C."/>
            <person name="Gray E."/>
            <person name="Humphries M."/>
            <person name="Sycamore N."/>
            <person name="Barker D."/>
            <person name="Saunders D."/>
            <person name="Wallis J."/>
            <person name="Babbage A."/>
            <person name="Hammond S."/>
            <person name="Mashreghi-Mohammadi M."/>
            <person name="Barr L."/>
            <person name="Martin S."/>
            <person name="Wray P."/>
            <person name="Ellington A."/>
            <person name="Matthews N."/>
            <person name="Ellwood M."/>
            <person name="Woodmansey R."/>
            <person name="Clark G."/>
            <person name="Cooper J."/>
            <person name="Tromans A."/>
            <person name="Grafham D."/>
            <person name="Skuce C."/>
            <person name="Pandian R."/>
            <person name="Andrews R."/>
            <person name="Harrison E."/>
            <person name="Kimberley A."/>
            <person name="Garnett J."/>
            <person name="Fosker N."/>
            <person name="Hall R."/>
            <person name="Garner P."/>
            <person name="Kelly D."/>
            <person name="Bird C."/>
            <person name="Palmer S."/>
            <person name="Gehring I."/>
            <person name="Berger A."/>
            <person name="Dooley C.M."/>
            <person name="Ersan-Urun Z."/>
            <person name="Eser C."/>
            <person name="Geiger H."/>
            <person name="Geisler M."/>
            <person name="Karotki L."/>
            <person name="Kirn A."/>
            <person name="Konantz J."/>
            <person name="Konantz M."/>
            <person name="Oberlander M."/>
            <person name="Rudolph-Geiger S."/>
            <person name="Teucke M."/>
            <person name="Lanz C."/>
            <person name="Raddatz G."/>
            <person name="Osoegawa K."/>
            <person name="Zhu B."/>
            <person name="Rapp A."/>
            <person name="Widaa S."/>
            <person name="Langford C."/>
            <person name="Yang F."/>
            <person name="Schuster S.C."/>
            <person name="Carter N.P."/>
            <person name="Harrow J."/>
            <person name="Ning Z."/>
            <person name="Herrero J."/>
            <person name="Searle S.M."/>
            <person name="Enright A."/>
            <person name="Geisler R."/>
            <person name="Plasterk R.H."/>
            <person name="Lee C."/>
            <person name="Westerfield M."/>
            <person name="de Jong P.J."/>
            <person name="Zon L.I."/>
            <person name="Postlethwait J.H."/>
            <person name="Nusslein-Volhard C."/>
            <person name="Hubbard T.J."/>
            <person name="Roest Crollius H."/>
            <person name="Rogers J."/>
            <person name="Stemple D.L."/>
        </authorList>
    </citation>
    <scope>NUCLEOTIDE SEQUENCE [LARGE SCALE GENOMIC DNA]</scope>
    <source>
        <strain>Tuebingen</strain>
    </source>
</reference>
<reference key="2">
    <citation type="submission" date="2004-08" db="EMBL/GenBank/DDBJ databases">
        <authorList>
            <consortium name="NIH - Zebrafish Gene Collection (ZGC) project"/>
        </authorList>
    </citation>
    <scope>NUCLEOTIDE SEQUENCE [LARGE SCALE MRNA]</scope>
    <source>
        <tissue>Embryo</tissue>
    </source>
</reference>
<sequence>MSIMKKRSSRAADPDELLCCCEYIDRHGSRSHMVACCCDCEDLDEACDRWMNKEPQNPDSVSRALATINDRLRVPWISGARQIDVSLIPPLILLPVFLHIAALHYLLGIIMLTAMPITVLWYYFFTHRKKGRTLFFLGLALFSLFYMFYLFLTQVVPRGEVTELQLAVVTAGVALTVIFLMLTKRGPGLVRPRPSETHSTVTYHSTPPDVDGVYLNGARHQVVIGSRVASSEHTGEPGTEEEEEGVQKRNWCAVCKVVRPQRAGHCRICGVCVLRLDHHCVWINSCVGLANHRTFLLTLLFFLLTSIYGISLVLASVCPDQRVLTALFYCPDVYSQYSSALCFTCAWYSSIVTGGLLHLLLLQILNISLNVTEREARLALREKSAQRRLWGLIVHTGHYSRGFWSNWTEFLTMTEDTQPAGHKTEDLV</sequence>
<evidence type="ECO:0000250" key="1">
    <source>
        <dbReference type="UniProtKB" id="Q8IUH5"/>
    </source>
</evidence>
<evidence type="ECO:0000250" key="2">
    <source>
        <dbReference type="UniProtKB" id="Q8IYP9"/>
    </source>
</evidence>
<evidence type="ECO:0000255" key="3"/>
<evidence type="ECO:0000255" key="4">
    <source>
        <dbReference type="PROSITE-ProRule" id="PRU00067"/>
    </source>
</evidence>
<evidence type="ECO:0000305" key="5"/>
<evidence type="ECO:0000312" key="6">
    <source>
        <dbReference type="ZFIN" id="ZDB-GENE-040808-13"/>
    </source>
</evidence>
<gene>
    <name evidence="6" type="primary">zdhhc23b</name>
</gene>
<proteinExistence type="evidence at transcript level"/>
<feature type="chain" id="PRO_0000451131" description="Palmitoyltransferase ZDHHC23-B">
    <location>
        <begin position="1"/>
        <end position="428"/>
    </location>
</feature>
<feature type="topological domain" description="Cytoplasmic" evidence="5">
    <location>
        <begin position="1"/>
        <end position="82"/>
    </location>
</feature>
<feature type="transmembrane region" description="Helical" evidence="3">
    <location>
        <begin position="83"/>
        <end position="99"/>
    </location>
</feature>
<feature type="topological domain" description="Lumenal" evidence="5">
    <location>
        <begin position="100"/>
        <end position="105"/>
    </location>
</feature>
<feature type="transmembrane region" description="Helical" evidence="3">
    <location>
        <begin position="106"/>
        <end position="125"/>
    </location>
</feature>
<feature type="topological domain" description="Cytoplasmic" evidence="5">
    <location>
        <begin position="126"/>
        <end position="132"/>
    </location>
</feature>
<feature type="transmembrane region" description="Helical" evidence="3">
    <location>
        <begin position="133"/>
        <end position="153"/>
    </location>
</feature>
<feature type="topological domain" description="Lumenal" evidence="5">
    <location>
        <begin position="154"/>
        <end position="160"/>
    </location>
</feature>
<feature type="transmembrane region" description="Helical" evidence="3">
    <location>
        <begin position="161"/>
        <end position="181"/>
    </location>
</feature>
<feature type="topological domain" description="Cytoplasmic" evidence="5">
    <location>
        <begin position="182"/>
        <end position="294"/>
    </location>
</feature>
<feature type="transmembrane region" description="Helical" evidence="3">
    <location>
        <begin position="295"/>
        <end position="315"/>
    </location>
</feature>
<feature type="topological domain" description="Lumenal" evidence="5">
    <location>
        <begin position="316"/>
        <end position="350"/>
    </location>
</feature>
<feature type="transmembrane region" description="Helical" evidence="3">
    <location>
        <begin position="351"/>
        <end position="371"/>
    </location>
</feature>
<feature type="topological domain" description="Cytoplasmic" evidence="5">
    <location>
        <begin position="372"/>
        <end position="428"/>
    </location>
</feature>
<feature type="domain" description="DHHC" evidence="4">
    <location>
        <begin position="250"/>
        <end position="300"/>
    </location>
</feature>
<feature type="active site" description="S-palmitoyl cysteine intermediate" evidence="4">
    <location>
        <position position="280"/>
    </location>
</feature>
<feature type="sequence conflict" description="In Ref. 2; AAH79487." evidence="5" ref="2">
    <original>Q</original>
    <variation>R</variation>
    <location>
        <position position="261"/>
    </location>
</feature>
<feature type="sequence conflict" description="In Ref. 2; AAH79487." evidence="5" ref="2">
    <original>Y</original>
    <variation>F</variation>
    <location>
        <position position="308"/>
    </location>
</feature>
<keyword id="KW-0012">Acyltransferase</keyword>
<keyword id="KW-0333">Golgi apparatus</keyword>
<keyword id="KW-0449">Lipoprotein</keyword>
<keyword id="KW-0472">Membrane</keyword>
<keyword id="KW-0564">Palmitate</keyword>
<keyword id="KW-1185">Reference proteome</keyword>
<keyword id="KW-0808">Transferase</keyword>
<keyword id="KW-0812">Transmembrane</keyword>
<keyword id="KW-1133">Transmembrane helix</keyword>
<name>ZD23B_DANRE</name>
<accession>F1QX91</accession>
<accession>Q6AXL7</accession>
<dbReference type="EC" id="2.3.1.225" evidence="2"/>
<dbReference type="EMBL" id="CU929332">
    <property type="status" value="NOT_ANNOTATED_CDS"/>
    <property type="molecule type" value="Genomic_DNA"/>
</dbReference>
<dbReference type="EMBL" id="BC079487">
    <property type="protein sequence ID" value="AAH79487.1"/>
    <property type="status" value="ALT_INIT"/>
    <property type="molecule type" value="mRNA"/>
</dbReference>
<dbReference type="RefSeq" id="NP_001003757.1">
    <property type="nucleotide sequence ID" value="NM_001003757.1"/>
</dbReference>
<dbReference type="FunCoup" id="F1QX91">
    <property type="interactions" value="505"/>
</dbReference>
<dbReference type="STRING" id="7955.ENSDARP00000014201"/>
<dbReference type="PaxDb" id="7955-ENSDARP00000014201"/>
<dbReference type="Ensembl" id="ENSDART00000010126">
    <property type="protein sequence ID" value="ENSDARP00000014201"/>
    <property type="gene ID" value="ENSDARG00000003899"/>
</dbReference>
<dbReference type="GeneID" id="445301"/>
<dbReference type="KEGG" id="dre:445301"/>
<dbReference type="AGR" id="ZFIN:ZDB-GENE-040808-13"/>
<dbReference type="CTD" id="445301"/>
<dbReference type="ZFIN" id="ZDB-GENE-040808-13">
    <property type="gene designation" value="zdhhc23b"/>
</dbReference>
<dbReference type="eggNOG" id="KOG1311">
    <property type="taxonomic scope" value="Eukaryota"/>
</dbReference>
<dbReference type="HOGENOM" id="CLU_055455_0_0_1"/>
<dbReference type="InParanoid" id="F1QX91"/>
<dbReference type="OMA" id="GNWSEFM"/>
<dbReference type="OrthoDB" id="430659at2759"/>
<dbReference type="TreeFam" id="TF354316"/>
<dbReference type="PRO" id="PR:F1QX91"/>
<dbReference type="Proteomes" id="UP000000437">
    <property type="component" value="Alternate scaffold 24"/>
</dbReference>
<dbReference type="Proteomes" id="UP000000437">
    <property type="component" value="Chromosome 24"/>
</dbReference>
<dbReference type="Bgee" id="ENSDARG00000003899">
    <property type="expression patterns" value="Expressed in ovary and 22 other cell types or tissues"/>
</dbReference>
<dbReference type="GO" id="GO:0005783">
    <property type="term" value="C:endoplasmic reticulum"/>
    <property type="evidence" value="ECO:0000318"/>
    <property type="project" value="GO_Central"/>
</dbReference>
<dbReference type="GO" id="GO:0005794">
    <property type="term" value="C:Golgi apparatus"/>
    <property type="evidence" value="ECO:0000318"/>
    <property type="project" value="GO_Central"/>
</dbReference>
<dbReference type="GO" id="GO:0000139">
    <property type="term" value="C:Golgi membrane"/>
    <property type="evidence" value="ECO:0007669"/>
    <property type="project" value="UniProtKB-SubCell"/>
</dbReference>
<dbReference type="GO" id="GO:0019706">
    <property type="term" value="F:protein-cysteine S-palmitoyltransferase activity"/>
    <property type="evidence" value="ECO:0000318"/>
    <property type="project" value="GO_Central"/>
</dbReference>
<dbReference type="GO" id="GO:0072659">
    <property type="term" value="P:protein localization to plasma membrane"/>
    <property type="evidence" value="ECO:0000318"/>
    <property type="project" value="GO_Central"/>
</dbReference>
<dbReference type="GO" id="GO:0006612">
    <property type="term" value="P:protein targeting to membrane"/>
    <property type="evidence" value="ECO:0000318"/>
    <property type="project" value="GO_Central"/>
</dbReference>
<dbReference type="InterPro" id="IPR001594">
    <property type="entry name" value="Palmitoyltrfase_DHHC"/>
</dbReference>
<dbReference type="InterPro" id="IPR039859">
    <property type="entry name" value="PFA4/ZDH16/20/ERF2-like"/>
</dbReference>
<dbReference type="PANTHER" id="PTHR22883:SF475">
    <property type="entry name" value="PALMITOYLTRANSFERASE ZDHHC23"/>
    <property type="match status" value="1"/>
</dbReference>
<dbReference type="PANTHER" id="PTHR22883">
    <property type="entry name" value="ZINC FINGER DHHC DOMAIN CONTAINING PROTEIN"/>
    <property type="match status" value="1"/>
</dbReference>
<dbReference type="Pfam" id="PF01529">
    <property type="entry name" value="DHHC"/>
    <property type="match status" value="1"/>
</dbReference>
<dbReference type="PROSITE" id="PS50216">
    <property type="entry name" value="DHHC"/>
    <property type="match status" value="1"/>
</dbReference>
<protein>
    <recommendedName>
        <fullName evidence="5">Palmitoyltransferase ZDHHC23-B</fullName>
        <ecNumber evidence="2">2.3.1.225</ecNumber>
    </recommendedName>
    <alternativeName>
        <fullName evidence="5">Zinc finger DHHC domain-containing protein 23-B</fullName>
    </alternativeName>
</protein>
<comment type="function">
    <text evidence="2">Palmitoyltransferase that could catalyze the addition of palmitate onto various protein substrates and be involved in a variety of cellular processes.</text>
</comment>
<comment type="catalytic activity">
    <reaction evidence="2">
        <text>L-cysteinyl-[protein] + hexadecanoyl-CoA = S-hexadecanoyl-L-cysteinyl-[protein] + CoA</text>
        <dbReference type="Rhea" id="RHEA:36683"/>
        <dbReference type="Rhea" id="RHEA-COMP:10131"/>
        <dbReference type="Rhea" id="RHEA-COMP:11032"/>
        <dbReference type="ChEBI" id="CHEBI:29950"/>
        <dbReference type="ChEBI" id="CHEBI:57287"/>
        <dbReference type="ChEBI" id="CHEBI:57379"/>
        <dbReference type="ChEBI" id="CHEBI:74151"/>
        <dbReference type="EC" id="2.3.1.225"/>
    </reaction>
    <physiologicalReaction direction="left-to-right" evidence="2">
        <dbReference type="Rhea" id="RHEA:36684"/>
    </physiologicalReaction>
</comment>
<comment type="subcellular location">
    <subcellularLocation>
        <location evidence="2">Golgi apparatus membrane</location>
        <topology evidence="3">Multi-pass membrane protein</topology>
    </subcellularLocation>
    <subcellularLocation>
        <location evidence="2">Golgi apparatus</location>
        <location evidence="2">trans-Golgi network membrane</location>
        <topology evidence="3">Multi-pass membrane protein</topology>
    </subcellularLocation>
</comment>
<comment type="domain">
    <text evidence="1">The DHHC domain is required for palmitoyltransferase activity.</text>
</comment>
<comment type="similarity">
    <text evidence="5">Belongs to the DHHC palmitoyltransferase family.</text>
</comment>
<comment type="sequence caution" evidence="5">
    <conflict type="erroneous initiation">
        <sequence resource="EMBL-CDS" id="AAH79487"/>
    </conflict>
    <text>Truncated N-terminus.</text>
</comment>